<evidence type="ECO:0000255" key="1">
    <source>
        <dbReference type="HAMAP-Rule" id="MF_01333"/>
    </source>
</evidence>
<evidence type="ECO:0000305" key="2"/>
<organism>
    <name type="scientific">Cronobacter sakazakii (strain ATCC BAA-894)</name>
    <name type="common">Enterobacter sakazakii</name>
    <dbReference type="NCBI Taxonomy" id="290339"/>
    <lineage>
        <taxon>Bacteria</taxon>
        <taxon>Pseudomonadati</taxon>
        <taxon>Pseudomonadota</taxon>
        <taxon>Gammaproteobacteria</taxon>
        <taxon>Enterobacterales</taxon>
        <taxon>Enterobacteriaceae</taxon>
        <taxon>Cronobacter</taxon>
    </lineage>
</organism>
<reference key="1">
    <citation type="journal article" date="2010" name="PLoS ONE">
        <title>Genome sequence of Cronobacter sakazakii BAA-894 and comparative genomic hybridization analysis with other Cronobacter species.</title>
        <authorList>
            <person name="Kucerova E."/>
            <person name="Clifton S.W."/>
            <person name="Xia X.Q."/>
            <person name="Long F."/>
            <person name="Porwollik S."/>
            <person name="Fulton L."/>
            <person name="Fronick C."/>
            <person name="Minx P."/>
            <person name="Kyung K."/>
            <person name="Warren W."/>
            <person name="Fulton R."/>
            <person name="Feng D."/>
            <person name="Wollam A."/>
            <person name="Shah N."/>
            <person name="Bhonagiri V."/>
            <person name="Nash W.E."/>
            <person name="Hallsworth-Pepin K."/>
            <person name="Wilson R.K."/>
            <person name="McClelland M."/>
            <person name="Forsythe S.J."/>
        </authorList>
    </citation>
    <scope>NUCLEOTIDE SEQUENCE [LARGE SCALE GENOMIC DNA]</scope>
    <source>
        <strain>ATCC BAA-894</strain>
    </source>
</reference>
<dbReference type="EMBL" id="CP000783">
    <property type="protein sequence ID" value="ABU75327.1"/>
    <property type="molecule type" value="Genomic_DNA"/>
</dbReference>
<dbReference type="RefSeq" id="WP_004388613.1">
    <property type="nucleotide sequence ID" value="NC_009778.1"/>
</dbReference>
<dbReference type="SMR" id="A7MPH6"/>
<dbReference type="GeneID" id="56733013"/>
<dbReference type="KEGG" id="esa:ESA_00018"/>
<dbReference type="HOGENOM" id="CLU_061015_2_1_6"/>
<dbReference type="Proteomes" id="UP000000260">
    <property type="component" value="Chromosome"/>
</dbReference>
<dbReference type="GO" id="GO:1990904">
    <property type="term" value="C:ribonucleoprotein complex"/>
    <property type="evidence" value="ECO:0007669"/>
    <property type="project" value="UniProtKB-KW"/>
</dbReference>
<dbReference type="GO" id="GO:0005840">
    <property type="term" value="C:ribosome"/>
    <property type="evidence" value="ECO:0007669"/>
    <property type="project" value="UniProtKB-KW"/>
</dbReference>
<dbReference type="GO" id="GO:0019843">
    <property type="term" value="F:rRNA binding"/>
    <property type="evidence" value="ECO:0007669"/>
    <property type="project" value="UniProtKB-UniRule"/>
</dbReference>
<dbReference type="GO" id="GO:0003735">
    <property type="term" value="F:structural constituent of ribosome"/>
    <property type="evidence" value="ECO:0007669"/>
    <property type="project" value="InterPro"/>
</dbReference>
<dbReference type="GO" id="GO:0000049">
    <property type="term" value="F:tRNA binding"/>
    <property type="evidence" value="ECO:0007669"/>
    <property type="project" value="UniProtKB-UniRule"/>
</dbReference>
<dbReference type="GO" id="GO:0006412">
    <property type="term" value="P:translation"/>
    <property type="evidence" value="ECO:0007669"/>
    <property type="project" value="UniProtKB-UniRule"/>
</dbReference>
<dbReference type="FunFam" id="3.30.1440.10:FF:000001">
    <property type="entry name" value="50S ribosomal protein L5"/>
    <property type="match status" value="1"/>
</dbReference>
<dbReference type="Gene3D" id="3.30.1440.10">
    <property type="match status" value="1"/>
</dbReference>
<dbReference type="HAMAP" id="MF_01333_B">
    <property type="entry name" value="Ribosomal_uL5_B"/>
    <property type="match status" value="1"/>
</dbReference>
<dbReference type="InterPro" id="IPR002132">
    <property type="entry name" value="Ribosomal_uL5"/>
</dbReference>
<dbReference type="InterPro" id="IPR020930">
    <property type="entry name" value="Ribosomal_uL5_bac-type"/>
</dbReference>
<dbReference type="InterPro" id="IPR031309">
    <property type="entry name" value="Ribosomal_uL5_C"/>
</dbReference>
<dbReference type="InterPro" id="IPR020929">
    <property type="entry name" value="Ribosomal_uL5_CS"/>
</dbReference>
<dbReference type="InterPro" id="IPR022803">
    <property type="entry name" value="Ribosomal_uL5_dom_sf"/>
</dbReference>
<dbReference type="InterPro" id="IPR031310">
    <property type="entry name" value="Ribosomal_uL5_N"/>
</dbReference>
<dbReference type="NCBIfam" id="NF000585">
    <property type="entry name" value="PRK00010.1"/>
    <property type="match status" value="1"/>
</dbReference>
<dbReference type="PANTHER" id="PTHR11994">
    <property type="entry name" value="60S RIBOSOMAL PROTEIN L11-RELATED"/>
    <property type="match status" value="1"/>
</dbReference>
<dbReference type="Pfam" id="PF00281">
    <property type="entry name" value="Ribosomal_L5"/>
    <property type="match status" value="1"/>
</dbReference>
<dbReference type="Pfam" id="PF00673">
    <property type="entry name" value="Ribosomal_L5_C"/>
    <property type="match status" value="1"/>
</dbReference>
<dbReference type="PIRSF" id="PIRSF002161">
    <property type="entry name" value="Ribosomal_L5"/>
    <property type="match status" value="1"/>
</dbReference>
<dbReference type="SUPFAM" id="SSF55282">
    <property type="entry name" value="RL5-like"/>
    <property type="match status" value="1"/>
</dbReference>
<dbReference type="PROSITE" id="PS00358">
    <property type="entry name" value="RIBOSOMAL_L5"/>
    <property type="match status" value="1"/>
</dbReference>
<gene>
    <name evidence="1" type="primary">rplE</name>
    <name type="ordered locus">ESA_00018</name>
</gene>
<sequence>MAKLHDYYKDEVVKKLMTQFNYNSVMQVPRVEKITLNMGVGEAIADKKLLDNAAADLAAISGQKPLITKARKSVAGFKIRQGYPIGCKVTLRGERMWEFFERLITIAVPRIRDFRGLSAKSFDGRGNYSMGVREQIIFPEIDYDKVDRVRGLDITITTTAKSDEEGRALLAAFDFPFRK</sequence>
<protein>
    <recommendedName>
        <fullName evidence="1">Large ribosomal subunit protein uL5</fullName>
    </recommendedName>
    <alternativeName>
        <fullName evidence="2">50S ribosomal protein L5</fullName>
    </alternativeName>
</protein>
<accession>A7MPH6</accession>
<keyword id="KW-1185">Reference proteome</keyword>
<keyword id="KW-0687">Ribonucleoprotein</keyword>
<keyword id="KW-0689">Ribosomal protein</keyword>
<keyword id="KW-0694">RNA-binding</keyword>
<keyword id="KW-0699">rRNA-binding</keyword>
<keyword id="KW-0820">tRNA-binding</keyword>
<name>RL5_CROS8</name>
<comment type="function">
    <text evidence="1">This is one of the proteins that bind and probably mediate the attachment of the 5S RNA into the large ribosomal subunit, where it forms part of the central protuberance. In the 70S ribosome it contacts protein S13 of the 30S subunit (bridge B1b), connecting the 2 subunits; this bridge is implicated in subunit movement. Contacts the P site tRNA; the 5S rRNA and some of its associated proteins might help stabilize positioning of ribosome-bound tRNAs.</text>
</comment>
<comment type="subunit">
    <text evidence="1">Part of the 50S ribosomal subunit; part of the 5S rRNA/L5/L18/L25 subcomplex. Contacts the 5S rRNA and the P site tRNA. Forms a bridge to the 30S subunit in the 70S ribosome.</text>
</comment>
<comment type="similarity">
    <text evidence="1">Belongs to the universal ribosomal protein uL5 family.</text>
</comment>
<feature type="chain" id="PRO_1000052733" description="Large ribosomal subunit protein uL5">
    <location>
        <begin position="1"/>
        <end position="179"/>
    </location>
</feature>
<proteinExistence type="inferred from homology"/>